<gene>
    <name type="ordered locus">Rv0647c</name>
    <name type="ORF">MTCY20H10.28c</name>
</gene>
<reference key="1">
    <citation type="journal article" date="1998" name="Nature">
        <title>Deciphering the biology of Mycobacterium tuberculosis from the complete genome sequence.</title>
        <authorList>
            <person name="Cole S.T."/>
            <person name="Brosch R."/>
            <person name="Parkhill J."/>
            <person name="Garnier T."/>
            <person name="Churcher C.M."/>
            <person name="Harris D.E."/>
            <person name="Gordon S.V."/>
            <person name="Eiglmeier K."/>
            <person name="Gas S."/>
            <person name="Barry C.E. III"/>
            <person name="Tekaia F."/>
            <person name="Badcock K."/>
            <person name="Basham D."/>
            <person name="Brown D."/>
            <person name="Chillingworth T."/>
            <person name="Connor R."/>
            <person name="Davies R.M."/>
            <person name="Devlin K."/>
            <person name="Feltwell T."/>
            <person name="Gentles S."/>
            <person name="Hamlin N."/>
            <person name="Holroyd S."/>
            <person name="Hornsby T."/>
            <person name="Jagels K."/>
            <person name="Krogh A."/>
            <person name="McLean J."/>
            <person name="Moule S."/>
            <person name="Murphy L.D."/>
            <person name="Oliver S."/>
            <person name="Osborne J."/>
            <person name="Quail M.A."/>
            <person name="Rajandream M.A."/>
            <person name="Rogers J."/>
            <person name="Rutter S."/>
            <person name="Seeger K."/>
            <person name="Skelton S."/>
            <person name="Squares S."/>
            <person name="Squares R."/>
            <person name="Sulston J.E."/>
            <person name="Taylor K."/>
            <person name="Whitehead S."/>
            <person name="Barrell B.G."/>
        </authorList>
    </citation>
    <scope>NUCLEOTIDE SEQUENCE [LARGE SCALE GENOMIC DNA]</scope>
    <source>
        <strain>ATCC 25618 / H37Rv</strain>
    </source>
</reference>
<reference key="2">
    <citation type="journal article" date="2011" name="Mol. Cell. Proteomics">
        <title>Proteogenomic analysis of Mycobacterium tuberculosis by high resolution mass spectrometry.</title>
        <authorList>
            <person name="Kelkar D.S."/>
            <person name="Kumar D."/>
            <person name="Kumar P."/>
            <person name="Balakrishnan L."/>
            <person name="Muthusamy B."/>
            <person name="Yadav A.K."/>
            <person name="Shrivastava P."/>
            <person name="Marimuthu A."/>
            <person name="Anand S."/>
            <person name="Sundaram H."/>
            <person name="Kingsbury R."/>
            <person name="Harsha H.C."/>
            <person name="Nair B."/>
            <person name="Prasad T.S."/>
            <person name="Chauhan D.S."/>
            <person name="Katoch K."/>
            <person name="Katoch V.M."/>
            <person name="Kumar P."/>
            <person name="Chaerkady R."/>
            <person name="Ramachandran S."/>
            <person name="Dash D."/>
            <person name="Pandey A."/>
        </authorList>
    </citation>
    <scope>IDENTIFICATION BY MASS SPECTROMETRY [LARGE SCALE ANALYSIS]</scope>
    <source>
        <strain>ATCC 25618 / H37Rv</strain>
    </source>
</reference>
<accession>P9WQI1</accession>
<accession>L0T4B8</accession>
<accession>P96936</accession>
<sequence>MRAEIGPDFRPHYTFGDAYPASERAHVNWELSAPVWHTAQMGSTTHREVAKLDRVPLPVEAARVAATGWQVTRTAVRFIGRLPRKGPWQQKVIKELPQTFADLGPTYVKFGQIIASSPGAFGESLSREFRGLLDRVPPAKTDEVHKLFVEELGDEPARLFASFEEEPFASASIAQVHYATLRSGEEVVVKIQRPGIRRRVAADLQILKRFAQTVELAKLGRRLSAQDVVADFADNLAEELDFRLEAQSMEAWVSHLHASPLGKNIRVPQVHWDFTTERVLTMERVHGIRIDNAAAIRKAGFDGVELVKALLFSVFEGGLRHGLFHGDLHAGNLYVDEAGRIVFFDFGIMGRIDPRTRWLLRELVYALLVKKDHAAAGKIVVLMGAVGTMKPETQAAKDLERFATPLTMQSLGDMSYADIGRQLSALADAYDVKLPRELVLIGKQFLYVERYMKLLAPRWQMMSDPQLTGYFANFMVEVSREHQSDIEV</sequence>
<organism>
    <name type="scientific">Mycobacterium tuberculosis (strain ATCC 25618 / H37Rv)</name>
    <dbReference type="NCBI Taxonomy" id="83332"/>
    <lineage>
        <taxon>Bacteria</taxon>
        <taxon>Bacillati</taxon>
        <taxon>Actinomycetota</taxon>
        <taxon>Actinomycetes</taxon>
        <taxon>Mycobacteriales</taxon>
        <taxon>Mycobacteriaceae</taxon>
        <taxon>Mycobacterium</taxon>
        <taxon>Mycobacterium tuberculosis complex</taxon>
    </lineage>
</organism>
<name>Y647_MYCTU</name>
<evidence type="ECO:0000305" key="1"/>
<dbReference type="EMBL" id="AL123456">
    <property type="protein sequence ID" value="CCP43390.1"/>
    <property type="molecule type" value="Genomic_DNA"/>
</dbReference>
<dbReference type="PIR" id="D70614">
    <property type="entry name" value="D70614"/>
</dbReference>
<dbReference type="RefSeq" id="NP_215161.1">
    <property type="nucleotide sequence ID" value="NC_000962.3"/>
</dbReference>
<dbReference type="RefSeq" id="WP_003403317.1">
    <property type="nucleotide sequence ID" value="NC_000962.3"/>
</dbReference>
<dbReference type="SMR" id="P9WQI1"/>
<dbReference type="FunCoup" id="P9WQI1">
    <property type="interactions" value="226"/>
</dbReference>
<dbReference type="STRING" id="83332.Rv0647c"/>
<dbReference type="PaxDb" id="83332-Rv0647c"/>
<dbReference type="GeneID" id="888070"/>
<dbReference type="KEGG" id="mtu:Rv0647c"/>
<dbReference type="KEGG" id="mtv:RVBD_0647c"/>
<dbReference type="PATRIC" id="fig|83332.111.peg.718"/>
<dbReference type="TubercuList" id="Rv0647c"/>
<dbReference type="eggNOG" id="COG0661">
    <property type="taxonomic scope" value="Bacteria"/>
</dbReference>
<dbReference type="InParanoid" id="P9WQI1"/>
<dbReference type="OrthoDB" id="9795390at2"/>
<dbReference type="PhylomeDB" id="P9WQI1"/>
<dbReference type="Proteomes" id="UP000001584">
    <property type="component" value="Chromosome"/>
</dbReference>
<dbReference type="GO" id="GO:0005829">
    <property type="term" value="C:cytosol"/>
    <property type="evidence" value="ECO:0007005"/>
    <property type="project" value="MTBBASE"/>
</dbReference>
<dbReference type="GO" id="GO:0009274">
    <property type="term" value="C:peptidoglycan-based cell wall"/>
    <property type="evidence" value="ECO:0007005"/>
    <property type="project" value="MTBBASE"/>
</dbReference>
<dbReference type="GO" id="GO:0005886">
    <property type="term" value="C:plasma membrane"/>
    <property type="evidence" value="ECO:0007005"/>
    <property type="project" value="MTBBASE"/>
</dbReference>
<dbReference type="GO" id="GO:0005524">
    <property type="term" value="F:ATP binding"/>
    <property type="evidence" value="ECO:0007669"/>
    <property type="project" value="InterPro"/>
</dbReference>
<dbReference type="GO" id="GO:0004672">
    <property type="term" value="F:protein kinase activity"/>
    <property type="evidence" value="ECO:0007669"/>
    <property type="project" value="InterPro"/>
</dbReference>
<dbReference type="CDD" id="cd05121">
    <property type="entry name" value="ABC1_ADCK3-like"/>
    <property type="match status" value="1"/>
</dbReference>
<dbReference type="InterPro" id="IPR004147">
    <property type="entry name" value="ABC1_dom"/>
</dbReference>
<dbReference type="InterPro" id="IPR011009">
    <property type="entry name" value="Kinase-like_dom_sf"/>
</dbReference>
<dbReference type="InterPro" id="IPR000719">
    <property type="entry name" value="Prot_kinase_dom"/>
</dbReference>
<dbReference type="InterPro" id="IPR050154">
    <property type="entry name" value="UbiB_kinase"/>
</dbReference>
<dbReference type="PANTHER" id="PTHR10566">
    <property type="entry name" value="CHAPERONE-ACTIVITY OF BC1 COMPLEX CABC1 -RELATED"/>
    <property type="match status" value="1"/>
</dbReference>
<dbReference type="PANTHER" id="PTHR10566:SF113">
    <property type="entry name" value="PROTEIN ACTIVITY OF BC1 COMPLEX KINASE 7, CHLOROPLASTIC"/>
    <property type="match status" value="1"/>
</dbReference>
<dbReference type="Pfam" id="PF03109">
    <property type="entry name" value="ABC1"/>
    <property type="match status" value="1"/>
</dbReference>
<dbReference type="SUPFAM" id="SSF56112">
    <property type="entry name" value="Protein kinase-like (PK-like)"/>
    <property type="match status" value="1"/>
</dbReference>
<protein>
    <recommendedName>
        <fullName>Uncharacterized protein Rv0647c</fullName>
    </recommendedName>
</protein>
<feature type="chain" id="PRO_0000200735" description="Uncharacterized protein Rv0647c">
    <location>
        <begin position="1"/>
        <end position="488"/>
    </location>
</feature>
<keyword id="KW-1185">Reference proteome</keyword>
<comment type="similarity">
    <text evidence="1">Belongs to the protein kinase superfamily. ADCK protein kinase family.</text>
</comment>
<proteinExistence type="evidence at protein level"/>